<evidence type="ECO:0000250" key="1">
    <source>
        <dbReference type="UniProtKB" id="B2HSU8"/>
    </source>
</evidence>
<evidence type="ECO:0000255" key="2"/>
<evidence type="ECO:0000269" key="3">
    <source>
    </source>
</evidence>
<evidence type="ECO:0000269" key="4">
    <source>
    </source>
</evidence>
<evidence type="ECO:0000303" key="5">
    <source>
    </source>
</evidence>
<evidence type="ECO:0000305" key="6"/>
<dbReference type="EMBL" id="AL123456">
    <property type="protein sequence ID" value="CCP44563.1"/>
    <property type="molecule type" value="Genomic_DNA"/>
</dbReference>
<dbReference type="PIR" id="F70930">
    <property type="entry name" value="F70930"/>
</dbReference>
<dbReference type="RefSeq" id="NP_216313.1">
    <property type="nucleotide sequence ID" value="NC_000962.3"/>
</dbReference>
<dbReference type="RefSeq" id="WP_003408859.1">
    <property type="nucleotide sequence ID" value="NZ_NVQJ01000037.1"/>
</dbReference>
<dbReference type="STRING" id="83332.Rv1797"/>
<dbReference type="PaxDb" id="83332-Rv1797"/>
<dbReference type="DNASU" id="885452"/>
<dbReference type="GeneID" id="45425774"/>
<dbReference type="GeneID" id="885452"/>
<dbReference type="KEGG" id="mtu:Rv1797"/>
<dbReference type="KEGG" id="mtv:RVBD_1797"/>
<dbReference type="TubercuList" id="Rv1797"/>
<dbReference type="eggNOG" id="ENOG5031ZQB">
    <property type="taxonomic scope" value="Bacteria"/>
</dbReference>
<dbReference type="InParanoid" id="P9WJE3"/>
<dbReference type="OrthoDB" id="4672446at2"/>
<dbReference type="Proteomes" id="UP000001584">
    <property type="component" value="Chromosome"/>
</dbReference>
<dbReference type="GO" id="GO:0005829">
    <property type="term" value="C:cytosol"/>
    <property type="evidence" value="ECO:0007005"/>
    <property type="project" value="MTBBASE"/>
</dbReference>
<dbReference type="GO" id="GO:0005886">
    <property type="term" value="C:plasma membrane"/>
    <property type="evidence" value="ECO:0007005"/>
    <property type="project" value="MTBBASE"/>
</dbReference>
<dbReference type="InterPro" id="IPR050051">
    <property type="entry name" value="EccE_dom"/>
</dbReference>
<dbReference type="InterPro" id="IPR021368">
    <property type="entry name" value="T7SS_EccE"/>
</dbReference>
<dbReference type="NCBIfam" id="TIGR03923">
    <property type="entry name" value="T7SS_EccE"/>
    <property type="match status" value="1"/>
</dbReference>
<dbReference type="Pfam" id="PF11203">
    <property type="entry name" value="EccE"/>
    <property type="match status" value="1"/>
</dbReference>
<sequence length="406" mass="44178">MKAQRSFGLALSWPRVTAVFLVDVLILAVASHCPDSWQADHHVAWWVGVGVAAVVTLLSVVSYHGITVISGLATWVRDWSADPGTTLGAGCTPAIDHQRRFGRDTVGVREYNGRLVSVIEVTCGESGPSGRHWHRKSPVPMLPVVAVADGLRQFDIHLDGIDIVSVLVRGGVDAAKASASLQEWEPQGWKSEERAGDRTVADRRRTWLVLRMNPQRNVAAVACRDSLASTLVAATERLVQDLDGQSCAARPVTADELTEVDSAVLADLEPTWSRPGWRHLKHFNGYATSFWVTPSDITSETLDELCLPDSPEVGTTVVTVRLTTRVGSPALSAWVRYHSDTRLPKEVAAGLNRLTGRQLAAVRASLPAPTHRPLLVIPSRNLRDHDELVLPVGQELEHATSSFVGQ</sequence>
<proteinExistence type="evidence at protein level"/>
<name>ECCE5_MYCTU</name>
<comment type="function">
    <text evidence="3 4">Part of the ESX-5 specialized secretion system, which is responsible for the secretion of EsxN and a number of PE_PGRS and PPE proteins, including PPE41.</text>
</comment>
<comment type="subunit">
    <text evidence="1">Part of the ESX-5 / type VII secretion system (T7SS), which is composed of cytosolic and membrane components. The ESX-5 membrane complex is composed of EccB5, EccC5, EccD5 and EccE5.</text>
</comment>
<comment type="subcellular location">
    <subcellularLocation>
        <location evidence="1">Cell inner membrane</location>
        <topology evidence="2">Multi-pass membrane protein</topology>
    </subcellularLocation>
</comment>
<comment type="similarity">
    <text evidence="6">Belongs to the EccE family.</text>
</comment>
<keyword id="KW-0997">Cell inner membrane</keyword>
<keyword id="KW-1003">Cell membrane</keyword>
<keyword id="KW-0472">Membrane</keyword>
<keyword id="KW-1185">Reference proteome</keyword>
<keyword id="KW-0812">Transmembrane</keyword>
<keyword id="KW-1133">Transmembrane helix</keyword>
<keyword id="KW-0813">Transport</keyword>
<reference key="1">
    <citation type="journal article" date="1998" name="Nature">
        <title>Deciphering the biology of Mycobacterium tuberculosis from the complete genome sequence.</title>
        <authorList>
            <person name="Cole S.T."/>
            <person name="Brosch R."/>
            <person name="Parkhill J."/>
            <person name="Garnier T."/>
            <person name="Churcher C.M."/>
            <person name="Harris D.E."/>
            <person name="Gordon S.V."/>
            <person name="Eiglmeier K."/>
            <person name="Gas S."/>
            <person name="Barry C.E. III"/>
            <person name="Tekaia F."/>
            <person name="Badcock K."/>
            <person name="Basham D."/>
            <person name="Brown D."/>
            <person name="Chillingworth T."/>
            <person name="Connor R."/>
            <person name="Davies R.M."/>
            <person name="Devlin K."/>
            <person name="Feltwell T."/>
            <person name="Gentles S."/>
            <person name="Hamlin N."/>
            <person name="Holroyd S."/>
            <person name="Hornsby T."/>
            <person name="Jagels K."/>
            <person name="Krogh A."/>
            <person name="McLean J."/>
            <person name="Moule S."/>
            <person name="Murphy L.D."/>
            <person name="Oliver S."/>
            <person name="Osborne J."/>
            <person name="Quail M.A."/>
            <person name="Rajandream M.A."/>
            <person name="Rogers J."/>
            <person name="Rutter S."/>
            <person name="Seeger K."/>
            <person name="Skelton S."/>
            <person name="Squares S."/>
            <person name="Squares R."/>
            <person name="Sulston J.E."/>
            <person name="Taylor K."/>
            <person name="Whitehead S."/>
            <person name="Barrell B.G."/>
        </authorList>
    </citation>
    <scope>NUCLEOTIDE SEQUENCE [LARGE SCALE GENOMIC DNA]</scope>
    <source>
        <strain>ATCC 25618 / H37Rv</strain>
    </source>
</reference>
<reference key="2">
    <citation type="journal article" date="2009" name="PLoS Pathog.">
        <title>Systematic genetic nomenclature for type VII secretion systems.</title>
        <authorList>
            <person name="Bitter W."/>
            <person name="Houben E.N."/>
            <person name="Bottai D."/>
            <person name="Brodin P."/>
            <person name="Brown E.J."/>
            <person name="Cox J.S."/>
            <person name="Derbyshire K."/>
            <person name="Fortune S.M."/>
            <person name="Gao L.Y."/>
            <person name="Liu J."/>
            <person name="Gey van Pittius N.C."/>
            <person name="Pym A.S."/>
            <person name="Rubin E.J."/>
            <person name="Sherman D.R."/>
            <person name="Cole S.T."/>
            <person name="Brosch R."/>
        </authorList>
    </citation>
    <scope>NOMENCLATURE</scope>
</reference>
<reference key="3">
    <citation type="journal article" date="2011" name="Mol. Cell. Proteomics">
        <title>Proteogenomic analysis of Mycobacterium tuberculosis by high resolution mass spectrometry.</title>
        <authorList>
            <person name="Kelkar D.S."/>
            <person name="Kumar D."/>
            <person name="Kumar P."/>
            <person name="Balakrishnan L."/>
            <person name="Muthusamy B."/>
            <person name="Yadav A.K."/>
            <person name="Shrivastava P."/>
            <person name="Marimuthu A."/>
            <person name="Anand S."/>
            <person name="Sundaram H."/>
            <person name="Kingsbury R."/>
            <person name="Harsha H.C."/>
            <person name="Nair B."/>
            <person name="Prasad T.S."/>
            <person name="Chauhan D.S."/>
            <person name="Katoch K."/>
            <person name="Katoch V.M."/>
            <person name="Kumar P."/>
            <person name="Chaerkady R."/>
            <person name="Ramachandran S."/>
            <person name="Dash D."/>
            <person name="Pandey A."/>
        </authorList>
    </citation>
    <scope>IDENTIFICATION BY MASS SPECTROMETRY [LARGE SCALE ANALYSIS]</scope>
    <source>
        <strain>ATCC 25618 / H37Rv</strain>
    </source>
</reference>
<reference key="4">
    <citation type="journal article" date="2012" name="Mol. Microbiol.">
        <title>Disruption of the ESX-5 system of Mycobacterium tuberculosis causes loss of PPE protein secretion, reduction of cell wall integrity and strong attenuation.</title>
        <authorList>
            <person name="Bottai D."/>
            <person name="Di Luca M."/>
            <person name="Majlessi L."/>
            <person name="Frigui W."/>
            <person name="Simeone R."/>
            <person name="Sayes F."/>
            <person name="Bitter W."/>
            <person name="Brennan M.J."/>
            <person name="Leclerc C."/>
            <person name="Batoni G."/>
            <person name="Campa M."/>
            <person name="Brosch R."/>
            <person name="Esin S."/>
        </authorList>
    </citation>
    <scope>FUNCTION</scope>
    <source>
        <strain>H37Rv</strain>
    </source>
</reference>
<reference key="5">
    <citation type="journal article" date="2012" name="Mol. Microbiol.">
        <title>Composition of the type VII secretion system membrane complex.</title>
        <authorList>
            <person name="Houben E.N."/>
            <person name="Bestebroer J."/>
            <person name="Ummels R."/>
            <person name="Wilson L."/>
            <person name="Piersma S.R."/>
            <person name="Jimenez C.R."/>
            <person name="Ottenhoff T.H."/>
            <person name="Luirink J."/>
            <person name="Bitter W."/>
        </authorList>
    </citation>
    <scope>FUNCTION</scope>
</reference>
<gene>
    <name evidence="5" type="primary">eccE5</name>
    <name type="ordered locus">Rv1797</name>
</gene>
<organism>
    <name type="scientific">Mycobacterium tuberculosis (strain ATCC 25618 / H37Rv)</name>
    <dbReference type="NCBI Taxonomy" id="83332"/>
    <lineage>
        <taxon>Bacteria</taxon>
        <taxon>Bacillati</taxon>
        <taxon>Actinomycetota</taxon>
        <taxon>Actinomycetes</taxon>
        <taxon>Mycobacteriales</taxon>
        <taxon>Mycobacteriaceae</taxon>
        <taxon>Mycobacterium</taxon>
        <taxon>Mycobacterium tuberculosis complex</taxon>
    </lineage>
</organism>
<protein>
    <recommendedName>
        <fullName evidence="6">ESX-5 secretion system protein EccE5</fullName>
    </recommendedName>
    <alternativeName>
        <fullName evidence="5">ESX conserved component E5</fullName>
    </alternativeName>
    <alternativeName>
        <fullName evidence="6">Type VII secretion system protein EccE5</fullName>
        <shortName evidence="6">T7SS protein EccE5</shortName>
    </alternativeName>
</protein>
<feature type="chain" id="PRO_0000393872" description="ESX-5 secretion system protein EccE5">
    <location>
        <begin position="1"/>
        <end position="406"/>
    </location>
</feature>
<feature type="transmembrane region" description="Helical" evidence="2">
    <location>
        <begin position="9"/>
        <end position="29"/>
    </location>
</feature>
<feature type="transmembrane region" description="Helical" evidence="2">
    <location>
        <begin position="43"/>
        <end position="63"/>
    </location>
</feature>
<accession>P9WJE3</accession>
<accession>L0T7X7</accession>
<accession>O53946</accession>
<accession>Q7D7Y2</accession>